<gene>
    <name evidence="1" type="primary">pdxT</name>
    <name type="ordered locus">Ccel_1859</name>
</gene>
<feature type="chain" id="PRO_1000185882" description="Pyridoxal 5'-phosphate synthase subunit PdxT">
    <location>
        <begin position="1"/>
        <end position="189"/>
    </location>
</feature>
<feature type="active site" description="Nucleophile" evidence="1">
    <location>
        <position position="80"/>
    </location>
</feature>
<feature type="active site" description="Charge relay system" evidence="1">
    <location>
        <position position="172"/>
    </location>
</feature>
<feature type="active site" description="Charge relay system" evidence="1">
    <location>
        <position position="174"/>
    </location>
</feature>
<feature type="binding site" evidence="1">
    <location>
        <begin position="48"/>
        <end position="50"/>
    </location>
    <ligand>
        <name>L-glutamine</name>
        <dbReference type="ChEBI" id="CHEBI:58359"/>
    </ligand>
</feature>
<feature type="binding site" evidence="1">
    <location>
        <position position="107"/>
    </location>
    <ligand>
        <name>L-glutamine</name>
        <dbReference type="ChEBI" id="CHEBI:58359"/>
    </ligand>
</feature>
<feature type="binding site" evidence="1">
    <location>
        <begin position="136"/>
        <end position="137"/>
    </location>
    <ligand>
        <name>L-glutamine</name>
        <dbReference type="ChEBI" id="CHEBI:58359"/>
    </ligand>
</feature>
<name>PDXT_RUMCH</name>
<comment type="function">
    <text evidence="1">Catalyzes the hydrolysis of glutamine to glutamate and ammonia as part of the biosynthesis of pyridoxal 5'-phosphate. The resulting ammonia molecule is channeled to the active site of PdxS.</text>
</comment>
<comment type="catalytic activity">
    <reaction evidence="1">
        <text>aldehydo-D-ribose 5-phosphate + D-glyceraldehyde 3-phosphate + L-glutamine = pyridoxal 5'-phosphate + L-glutamate + phosphate + 3 H2O + H(+)</text>
        <dbReference type="Rhea" id="RHEA:31507"/>
        <dbReference type="ChEBI" id="CHEBI:15377"/>
        <dbReference type="ChEBI" id="CHEBI:15378"/>
        <dbReference type="ChEBI" id="CHEBI:29985"/>
        <dbReference type="ChEBI" id="CHEBI:43474"/>
        <dbReference type="ChEBI" id="CHEBI:58273"/>
        <dbReference type="ChEBI" id="CHEBI:58359"/>
        <dbReference type="ChEBI" id="CHEBI:59776"/>
        <dbReference type="ChEBI" id="CHEBI:597326"/>
        <dbReference type="EC" id="4.3.3.6"/>
    </reaction>
</comment>
<comment type="catalytic activity">
    <reaction evidence="1">
        <text>L-glutamine + H2O = L-glutamate + NH4(+)</text>
        <dbReference type="Rhea" id="RHEA:15889"/>
        <dbReference type="ChEBI" id="CHEBI:15377"/>
        <dbReference type="ChEBI" id="CHEBI:28938"/>
        <dbReference type="ChEBI" id="CHEBI:29985"/>
        <dbReference type="ChEBI" id="CHEBI:58359"/>
        <dbReference type="EC" id="3.5.1.2"/>
    </reaction>
</comment>
<comment type="pathway">
    <text evidence="1">Cofactor biosynthesis; pyridoxal 5'-phosphate biosynthesis.</text>
</comment>
<comment type="subunit">
    <text evidence="1">In the presence of PdxS, forms a dodecamer of heterodimers. Only shows activity in the heterodimer.</text>
</comment>
<comment type="similarity">
    <text evidence="1">Belongs to the glutaminase PdxT/SNO family.</text>
</comment>
<keyword id="KW-0315">Glutamine amidotransferase</keyword>
<keyword id="KW-0378">Hydrolase</keyword>
<keyword id="KW-0456">Lyase</keyword>
<keyword id="KW-0663">Pyridoxal phosphate</keyword>
<keyword id="KW-1185">Reference proteome</keyword>
<accession>B8I364</accession>
<evidence type="ECO:0000255" key="1">
    <source>
        <dbReference type="HAMAP-Rule" id="MF_01615"/>
    </source>
</evidence>
<protein>
    <recommendedName>
        <fullName evidence="1">Pyridoxal 5'-phosphate synthase subunit PdxT</fullName>
        <ecNumber evidence="1">4.3.3.6</ecNumber>
    </recommendedName>
    <alternativeName>
        <fullName evidence="1">Pdx2</fullName>
    </alternativeName>
    <alternativeName>
        <fullName evidence="1">Pyridoxal 5'-phosphate synthase glutaminase subunit</fullName>
        <ecNumber evidence="1">3.5.1.2</ecNumber>
    </alternativeName>
</protein>
<reference key="1">
    <citation type="submission" date="2009-01" db="EMBL/GenBank/DDBJ databases">
        <title>Complete sequence of Clostridium cellulolyticum H10.</title>
        <authorList>
            <consortium name="US DOE Joint Genome Institute"/>
            <person name="Lucas S."/>
            <person name="Copeland A."/>
            <person name="Lapidus A."/>
            <person name="Glavina del Rio T."/>
            <person name="Dalin E."/>
            <person name="Tice H."/>
            <person name="Bruce D."/>
            <person name="Goodwin L."/>
            <person name="Pitluck S."/>
            <person name="Chertkov O."/>
            <person name="Saunders E."/>
            <person name="Brettin T."/>
            <person name="Detter J.C."/>
            <person name="Han C."/>
            <person name="Larimer F."/>
            <person name="Land M."/>
            <person name="Hauser L."/>
            <person name="Kyrpides N."/>
            <person name="Ivanova N."/>
            <person name="Zhou J."/>
            <person name="Richardson P."/>
        </authorList>
    </citation>
    <scope>NUCLEOTIDE SEQUENCE [LARGE SCALE GENOMIC DNA]</scope>
    <source>
        <strain>ATCC 35319 / DSM 5812 / JCM 6584 / H10</strain>
    </source>
</reference>
<proteinExistence type="inferred from homology"/>
<sequence>MKKIGVLGLQGAISEHLDKLSKIPNVEPFSLKYKEEIDTIDGLIIPGGESTAIGRLLSDFNLTEPLKTRVNAGMPVWGTCAGMIILAKTITNDRRRHLEVMDINVMRNGYGRQLNSFTTEVSLAKVSSDKIPLVFIRAPYVVEVAPNVEVLLRVDENIVACRQDNMLATSFHPELTEDLSFHRYFAEMI</sequence>
<organism>
    <name type="scientific">Ruminiclostridium cellulolyticum (strain ATCC 35319 / DSM 5812 / JCM 6584 / H10)</name>
    <name type="common">Clostridium cellulolyticum</name>
    <dbReference type="NCBI Taxonomy" id="394503"/>
    <lineage>
        <taxon>Bacteria</taxon>
        <taxon>Bacillati</taxon>
        <taxon>Bacillota</taxon>
        <taxon>Clostridia</taxon>
        <taxon>Eubacteriales</taxon>
        <taxon>Oscillospiraceae</taxon>
        <taxon>Ruminiclostridium</taxon>
    </lineage>
</organism>
<dbReference type="EC" id="4.3.3.6" evidence="1"/>
<dbReference type="EC" id="3.5.1.2" evidence="1"/>
<dbReference type="EMBL" id="CP001348">
    <property type="protein sequence ID" value="ACL76207.1"/>
    <property type="molecule type" value="Genomic_DNA"/>
</dbReference>
<dbReference type="RefSeq" id="WP_015925312.1">
    <property type="nucleotide sequence ID" value="NC_011898.1"/>
</dbReference>
<dbReference type="SMR" id="B8I364"/>
<dbReference type="STRING" id="394503.Ccel_1859"/>
<dbReference type="MEROPS" id="C26.A32"/>
<dbReference type="KEGG" id="cce:Ccel_1859"/>
<dbReference type="eggNOG" id="COG0311">
    <property type="taxonomic scope" value="Bacteria"/>
</dbReference>
<dbReference type="HOGENOM" id="CLU_069674_2_0_9"/>
<dbReference type="OrthoDB" id="9810320at2"/>
<dbReference type="UniPathway" id="UPA00245"/>
<dbReference type="Proteomes" id="UP000001349">
    <property type="component" value="Chromosome"/>
</dbReference>
<dbReference type="GO" id="GO:0005829">
    <property type="term" value="C:cytosol"/>
    <property type="evidence" value="ECO:0007669"/>
    <property type="project" value="TreeGrafter"/>
</dbReference>
<dbReference type="GO" id="GO:1903600">
    <property type="term" value="C:glutaminase complex"/>
    <property type="evidence" value="ECO:0007669"/>
    <property type="project" value="TreeGrafter"/>
</dbReference>
<dbReference type="GO" id="GO:0004359">
    <property type="term" value="F:glutaminase activity"/>
    <property type="evidence" value="ECO:0007669"/>
    <property type="project" value="UniProtKB-UniRule"/>
</dbReference>
<dbReference type="GO" id="GO:0036381">
    <property type="term" value="F:pyridoxal 5'-phosphate synthase (glutamine hydrolysing) activity"/>
    <property type="evidence" value="ECO:0007669"/>
    <property type="project" value="UniProtKB-UniRule"/>
</dbReference>
<dbReference type="GO" id="GO:0006543">
    <property type="term" value="P:glutamine catabolic process"/>
    <property type="evidence" value="ECO:0007669"/>
    <property type="project" value="UniProtKB-UniRule"/>
</dbReference>
<dbReference type="GO" id="GO:0042823">
    <property type="term" value="P:pyridoxal phosphate biosynthetic process"/>
    <property type="evidence" value="ECO:0007669"/>
    <property type="project" value="UniProtKB-UniRule"/>
</dbReference>
<dbReference type="GO" id="GO:0008614">
    <property type="term" value="P:pyridoxine metabolic process"/>
    <property type="evidence" value="ECO:0007669"/>
    <property type="project" value="TreeGrafter"/>
</dbReference>
<dbReference type="CDD" id="cd01749">
    <property type="entry name" value="GATase1_PB"/>
    <property type="match status" value="1"/>
</dbReference>
<dbReference type="FunFam" id="3.40.50.880:FF:000010">
    <property type="entry name" value="uncharacterized protein LOC100176842 isoform X2"/>
    <property type="match status" value="1"/>
</dbReference>
<dbReference type="Gene3D" id="3.40.50.880">
    <property type="match status" value="1"/>
</dbReference>
<dbReference type="HAMAP" id="MF_01615">
    <property type="entry name" value="PdxT"/>
    <property type="match status" value="1"/>
</dbReference>
<dbReference type="InterPro" id="IPR029062">
    <property type="entry name" value="Class_I_gatase-like"/>
</dbReference>
<dbReference type="InterPro" id="IPR002161">
    <property type="entry name" value="PdxT/SNO"/>
</dbReference>
<dbReference type="InterPro" id="IPR021196">
    <property type="entry name" value="PdxT/SNO_CS"/>
</dbReference>
<dbReference type="NCBIfam" id="TIGR03800">
    <property type="entry name" value="PLP_synth_Pdx2"/>
    <property type="match status" value="1"/>
</dbReference>
<dbReference type="PANTHER" id="PTHR31559">
    <property type="entry name" value="PYRIDOXAL 5'-PHOSPHATE SYNTHASE SUBUNIT SNO"/>
    <property type="match status" value="1"/>
</dbReference>
<dbReference type="PANTHER" id="PTHR31559:SF0">
    <property type="entry name" value="PYRIDOXAL 5'-PHOSPHATE SYNTHASE SUBUNIT SNO1-RELATED"/>
    <property type="match status" value="1"/>
</dbReference>
<dbReference type="Pfam" id="PF01174">
    <property type="entry name" value="SNO"/>
    <property type="match status" value="1"/>
</dbReference>
<dbReference type="PIRSF" id="PIRSF005639">
    <property type="entry name" value="Glut_amidoT_SNO"/>
    <property type="match status" value="1"/>
</dbReference>
<dbReference type="SUPFAM" id="SSF52317">
    <property type="entry name" value="Class I glutamine amidotransferase-like"/>
    <property type="match status" value="1"/>
</dbReference>
<dbReference type="PROSITE" id="PS01236">
    <property type="entry name" value="PDXT_SNO_1"/>
    <property type="match status" value="1"/>
</dbReference>
<dbReference type="PROSITE" id="PS51130">
    <property type="entry name" value="PDXT_SNO_2"/>
    <property type="match status" value="1"/>
</dbReference>